<gene>
    <name type="primary">Mrpl3</name>
</gene>
<protein>
    <recommendedName>
        <fullName evidence="3">Large ribosomal subunit protein uL3m</fullName>
    </recommendedName>
    <alternativeName>
        <fullName>39S ribosomal protein L3, mitochondrial</fullName>
        <shortName>L3mt</shortName>
        <shortName>MRP-L3</shortName>
    </alternativeName>
</protein>
<organism>
    <name type="scientific">Mus musculus</name>
    <name type="common">Mouse</name>
    <dbReference type="NCBI Taxonomy" id="10090"/>
    <lineage>
        <taxon>Eukaryota</taxon>
        <taxon>Metazoa</taxon>
        <taxon>Chordata</taxon>
        <taxon>Craniata</taxon>
        <taxon>Vertebrata</taxon>
        <taxon>Euteleostomi</taxon>
        <taxon>Mammalia</taxon>
        <taxon>Eutheria</taxon>
        <taxon>Euarchontoglires</taxon>
        <taxon>Glires</taxon>
        <taxon>Rodentia</taxon>
        <taxon>Myomorpha</taxon>
        <taxon>Muroidea</taxon>
        <taxon>Muridae</taxon>
        <taxon>Murinae</taxon>
        <taxon>Mus</taxon>
        <taxon>Mus</taxon>
    </lineage>
</organism>
<name>RM03_MOUSE</name>
<dbReference type="EMBL" id="AB049633">
    <property type="protein sequence ID" value="BAB40838.1"/>
    <property type="molecule type" value="mRNA"/>
</dbReference>
<dbReference type="EMBL" id="AK077857">
    <property type="protein sequence ID" value="BAC37036.1"/>
    <property type="molecule type" value="mRNA"/>
</dbReference>
<dbReference type="EMBL" id="AK145687">
    <property type="protein sequence ID" value="BAE26589.1"/>
    <property type="molecule type" value="mRNA"/>
</dbReference>
<dbReference type="EMBL" id="AK169272">
    <property type="protein sequence ID" value="BAE41032.1"/>
    <property type="molecule type" value="mRNA"/>
</dbReference>
<dbReference type="EMBL" id="BC034877">
    <property type="protein sequence ID" value="AAH34877.1"/>
    <property type="molecule type" value="mRNA"/>
</dbReference>
<dbReference type="CCDS" id="CCDS23462.1"/>
<dbReference type="RefSeq" id="NP_444389.2">
    <property type="nucleotide sequence ID" value="NM_053159.3"/>
</dbReference>
<dbReference type="SMR" id="Q99N95"/>
<dbReference type="BioGRID" id="220434">
    <property type="interactions" value="34"/>
</dbReference>
<dbReference type="ComplexPortal" id="CPX-5302">
    <property type="entry name" value="39S mitochondrial large ribosomal subunit"/>
</dbReference>
<dbReference type="FunCoup" id="Q99N95">
    <property type="interactions" value="2567"/>
</dbReference>
<dbReference type="IntAct" id="Q99N95">
    <property type="interactions" value="1"/>
</dbReference>
<dbReference type="STRING" id="10090.ENSMUSP00000035177"/>
<dbReference type="iPTMnet" id="Q99N95"/>
<dbReference type="PhosphoSitePlus" id="Q99N95"/>
<dbReference type="SwissPalm" id="Q99N95"/>
<dbReference type="PaxDb" id="10090-ENSMUSP00000035177"/>
<dbReference type="ProteomicsDB" id="300517"/>
<dbReference type="Pumba" id="Q99N95"/>
<dbReference type="Antibodypedia" id="33349">
    <property type="antibodies" value="189 antibodies from 32 providers"/>
</dbReference>
<dbReference type="DNASU" id="94062"/>
<dbReference type="Ensembl" id="ENSMUST00000035177.15">
    <property type="protein sequence ID" value="ENSMUSP00000035177.9"/>
    <property type="gene ID" value="ENSMUSG00000032563.17"/>
</dbReference>
<dbReference type="GeneID" id="94062"/>
<dbReference type="KEGG" id="mmu:94062"/>
<dbReference type="UCSC" id="uc009rht.1">
    <property type="organism name" value="mouse"/>
</dbReference>
<dbReference type="AGR" id="MGI:2137204"/>
<dbReference type="CTD" id="11222"/>
<dbReference type="MGI" id="MGI:2137204">
    <property type="gene designation" value="Mrpl3"/>
</dbReference>
<dbReference type="VEuPathDB" id="HostDB:ENSMUSG00000032563"/>
<dbReference type="eggNOG" id="KOG3141">
    <property type="taxonomic scope" value="Eukaryota"/>
</dbReference>
<dbReference type="GeneTree" id="ENSGT00390000011422"/>
<dbReference type="InParanoid" id="Q99N95"/>
<dbReference type="OMA" id="IGIYPMW"/>
<dbReference type="OrthoDB" id="274683at2759"/>
<dbReference type="PhylomeDB" id="Q99N95"/>
<dbReference type="TreeFam" id="TF105634"/>
<dbReference type="Reactome" id="R-MMU-5389840">
    <property type="pathway name" value="Mitochondrial translation elongation"/>
</dbReference>
<dbReference type="Reactome" id="R-MMU-5419276">
    <property type="pathway name" value="Mitochondrial translation termination"/>
</dbReference>
<dbReference type="BioGRID-ORCS" id="94062">
    <property type="hits" value="20 hits in 79 CRISPR screens"/>
</dbReference>
<dbReference type="PRO" id="PR:Q99N95"/>
<dbReference type="Proteomes" id="UP000000589">
    <property type="component" value="Chromosome 9"/>
</dbReference>
<dbReference type="RNAct" id="Q99N95">
    <property type="molecule type" value="protein"/>
</dbReference>
<dbReference type="Bgee" id="ENSMUSG00000032563">
    <property type="expression patterns" value="Expressed in endocardial cushion and 251 other cell types or tissues"/>
</dbReference>
<dbReference type="ExpressionAtlas" id="Q99N95">
    <property type="expression patterns" value="baseline and differential"/>
</dbReference>
<dbReference type="GO" id="GO:0005743">
    <property type="term" value="C:mitochondrial inner membrane"/>
    <property type="evidence" value="ECO:0000303"/>
    <property type="project" value="ComplexPortal"/>
</dbReference>
<dbReference type="GO" id="GO:0005762">
    <property type="term" value="C:mitochondrial large ribosomal subunit"/>
    <property type="evidence" value="ECO:0000250"/>
    <property type="project" value="UniProtKB"/>
</dbReference>
<dbReference type="GO" id="GO:0005739">
    <property type="term" value="C:mitochondrion"/>
    <property type="evidence" value="ECO:0007005"/>
    <property type="project" value="MGI"/>
</dbReference>
<dbReference type="GO" id="GO:0003735">
    <property type="term" value="F:structural constituent of ribosome"/>
    <property type="evidence" value="ECO:0000266"/>
    <property type="project" value="MGI"/>
</dbReference>
<dbReference type="GO" id="GO:0032543">
    <property type="term" value="P:mitochondrial translation"/>
    <property type="evidence" value="ECO:0000303"/>
    <property type="project" value="ComplexPortal"/>
</dbReference>
<dbReference type="GO" id="GO:0006412">
    <property type="term" value="P:translation"/>
    <property type="evidence" value="ECO:0000266"/>
    <property type="project" value="MGI"/>
</dbReference>
<dbReference type="FunFam" id="2.40.30.10:FF:000049">
    <property type="entry name" value="39S ribosomal protein L3, mitochondrial"/>
    <property type="match status" value="1"/>
</dbReference>
<dbReference type="FunFam" id="2.40.30.10:FF:000067">
    <property type="entry name" value="39S ribosomal protein L3, mitochondrial"/>
    <property type="match status" value="1"/>
</dbReference>
<dbReference type="Gene3D" id="2.40.30.10">
    <property type="entry name" value="Translation factors"/>
    <property type="match status" value="2"/>
</dbReference>
<dbReference type="InterPro" id="IPR000597">
    <property type="entry name" value="Ribosomal_uL3"/>
</dbReference>
<dbReference type="InterPro" id="IPR019927">
    <property type="entry name" value="Ribosomal_uL3_bac/org-type"/>
</dbReference>
<dbReference type="InterPro" id="IPR019926">
    <property type="entry name" value="Ribosomal_uL3_CS"/>
</dbReference>
<dbReference type="InterPro" id="IPR009000">
    <property type="entry name" value="Transl_B-barrel_sf"/>
</dbReference>
<dbReference type="NCBIfam" id="TIGR03625">
    <property type="entry name" value="L3_bact"/>
    <property type="match status" value="1"/>
</dbReference>
<dbReference type="PANTHER" id="PTHR11229">
    <property type="entry name" value="50S RIBOSOMAL PROTEIN L3"/>
    <property type="match status" value="1"/>
</dbReference>
<dbReference type="PANTHER" id="PTHR11229:SF8">
    <property type="entry name" value="LARGE RIBOSOMAL SUBUNIT PROTEIN UL3M"/>
    <property type="match status" value="1"/>
</dbReference>
<dbReference type="Pfam" id="PF00297">
    <property type="entry name" value="Ribosomal_L3"/>
    <property type="match status" value="1"/>
</dbReference>
<dbReference type="SUPFAM" id="SSF50447">
    <property type="entry name" value="Translation proteins"/>
    <property type="match status" value="1"/>
</dbReference>
<dbReference type="PROSITE" id="PS00474">
    <property type="entry name" value="RIBOSOMAL_L3"/>
    <property type="match status" value="1"/>
</dbReference>
<proteinExistence type="evidence at protein level"/>
<reference key="1">
    <citation type="journal article" date="2001" name="J. Biol. Chem.">
        <title>Structural compensation for the deficit of rRNA with proteins in the mammalian mitochondrial ribosome. Systematic analysis of protein components of the large ribosomal subunit from mammalian mitochondria.</title>
        <authorList>
            <person name="Suzuki T."/>
            <person name="Terasaki M."/>
            <person name="Takemoto-Hori C."/>
            <person name="Hanada T."/>
            <person name="Ueda T."/>
            <person name="Wada A."/>
            <person name="Watanabe K."/>
        </authorList>
    </citation>
    <scope>NUCLEOTIDE SEQUENCE [MRNA]</scope>
</reference>
<reference key="2">
    <citation type="journal article" date="2005" name="Science">
        <title>The transcriptional landscape of the mammalian genome.</title>
        <authorList>
            <person name="Carninci P."/>
            <person name="Kasukawa T."/>
            <person name="Katayama S."/>
            <person name="Gough J."/>
            <person name="Frith M.C."/>
            <person name="Maeda N."/>
            <person name="Oyama R."/>
            <person name="Ravasi T."/>
            <person name="Lenhard B."/>
            <person name="Wells C."/>
            <person name="Kodzius R."/>
            <person name="Shimokawa K."/>
            <person name="Bajic V.B."/>
            <person name="Brenner S.E."/>
            <person name="Batalov S."/>
            <person name="Forrest A.R."/>
            <person name="Zavolan M."/>
            <person name="Davis M.J."/>
            <person name="Wilming L.G."/>
            <person name="Aidinis V."/>
            <person name="Allen J.E."/>
            <person name="Ambesi-Impiombato A."/>
            <person name="Apweiler R."/>
            <person name="Aturaliya R.N."/>
            <person name="Bailey T.L."/>
            <person name="Bansal M."/>
            <person name="Baxter L."/>
            <person name="Beisel K.W."/>
            <person name="Bersano T."/>
            <person name="Bono H."/>
            <person name="Chalk A.M."/>
            <person name="Chiu K.P."/>
            <person name="Choudhary V."/>
            <person name="Christoffels A."/>
            <person name="Clutterbuck D.R."/>
            <person name="Crowe M.L."/>
            <person name="Dalla E."/>
            <person name="Dalrymple B.P."/>
            <person name="de Bono B."/>
            <person name="Della Gatta G."/>
            <person name="di Bernardo D."/>
            <person name="Down T."/>
            <person name="Engstrom P."/>
            <person name="Fagiolini M."/>
            <person name="Faulkner G."/>
            <person name="Fletcher C.F."/>
            <person name="Fukushima T."/>
            <person name="Furuno M."/>
            <person name="Futaki S."/>
            <person name="Gariboldi M."/>
            <person name="Georgii-Hemming P."/>
            <person name="Gingeras T.R."/>
            <person name="Gojobori T."/>
            <person name="Green R.E."/>
            <person name="Gustincich S."/>
            <person name="Harbers M."/>
            <person name="Hayashi Y."/>
            <person name="Hensch T.K."/>
            <person name="Hirokawa N."/>
            <person name="Hill D."/>
            <person name="Huminiecki L."/>
            <person name="Iacono M."/>
            <person name="Ikeo K."/>
            <person name="Iwama A."/>
            <person name="Ishikawa T."/>
            <person name="Jakt M."/>
            <person name="Kanapin A."/>
            <person name="Katoh M."/>
            <person name="Kawasawa Y."/>
            <person name="Kelso J."/>
            <person name="Kitamura H."/>
            <person name="Kitano H."/>
            <person name="Kollias G."/>
            <person name="Krishnan S.P."/>
            <person name="Kruger A."/>
            <person name="Kummerfeld S.K."/>
            <person name="Kurochkin I.V."/>
            <person name="Lareau L.F."/>
            <person name="Lazarevic D."/>
            <person name="Lipovich L."/>
            <person name="Liu J."/>
            <person name="Liuni S."/>
            <person name="McWilliam S."/>
            <person name="Madan Babu M."/>
            <person name="Madera M."/>
            <person name="Marchionni L."/>
            <person name="Matsuda H."/>
            <person name="Matsuzawa S."/>
            <person name="Miki H."/>
            <person name="Mignone F."/>
            <person name="Miyake S."/>
            <person name="Morris K."/>
            <person name="Mottagui-Tabar S."/>
            <person name="Mulder N."/>
            <person name="Nakano N."/>
            <person name="Nakauchi H."/>
            <person name="Ng P."/>
            <person name="Nilsson R."/>
            <person name="Nishiguchi S."/>
            <person name="Nishikawa S."/>
            <person name="Nori F."/>
            <person name="Ohara O."/>
            <person name="Okazaki Y."/>
            <person name="Orlando V."/>
            <person name="Pang K.C."/>
            <person name="Pavan W.J."/>
            <person name="Pavesi G."/>
            <person name="Pesole G."/>
            <person name="Petrovsky N."/>
            <person name="Piazza S."/>
            <person name="Reed J."/>
            <person name="Reid J.F."/>
            <person name="Ring B.Z."/>
            <person name="Ringwald M."/>
            <person name="Rost B."/>
            <person name="Ruan Y."/>
            <person name="Salzberg S.L."/>
            <person name="Sandelin A."/>
            <person name="Schneider C."/>
            <person name="Schoenbach C."/>
            <person name="Sekiguchi K."/>
            <person name="Semple C.A."/>
            <person name="Seno S."/>
            <person name="Sessa L."/>
            <person name="Sheng Y."/>
            <person name="Shibata Y."/>
            <person name="Shimada H."/>
            <person name="Shimada K."/>
            <person name="Silva D."/>
            <person name="Sinclair B."/>
            <person name="Sperling S."/>
            <person name="Stupka E."/>
            <person name="Sugiura K."/>
            <person name="Sultana R."/>
            <person name="Takenaka Y."/>
            <person name="Taki K."/>
            <person name="Tammoja K."/>
            <person name="Tan S.L."/>
            <person name="Tang S."/>
            <person name="Taylor M.S."/>
            <person name="Tegner J."/>
            <person name="Teichmann S.A."/>
            <person name="Ueda H.R."/>
            <person name="van Nimwegen E."/>
            <person name="Verardo R."/>
            <person name="Wei C.L."/>
            <person name="Yagi K."/>
            <person name="Yamanishi H."/>
            <person name="Zabarovsky E."/>
            <person name="Zhu S."/>
            <person name="Zimmer A."/>
            <person name="Hide W."/>
            <person name="Bult C."/>
            <person name="Grimmond S.M."/>
            <person name="Teasdale R.D."/>
            <person name="Liu E.T."/>
            <person name="Brusic V."/>
            <person name="Quackenbush J."/>
            <person name="Wahlestedt C."/>
            <person name="Mattick J.S."/>
            <person name="Hume D.A."/>
            <person name="Kai C."/>
            <person name="Sasaki D."/>
            <person name="Tomaru Y."/>
            <person name="Fukuda S."/>
            <person name="Kanamori-Katayama M."/>
            <person name="Suzuki M."/>
            <person name="Aoki J."/>
            <person name="Arakawa T."/>
            <person name="Iida J."/>
            <person name="Imamura K."/>
            <person name="Itoh M."/>
            <person name="Kato T."/>
            <person name="Kawaji H."/>
            <person name="Kawagashira N."/>
            <person name="Kawashima T."/>
            <person name="Kojima M."/>
            <person name="Kondo S."/>
            <person name="Konno H."/>
            <person name="Nakano K."/>
            <person name="Ninomiya N."/>
            <person name="Nishio T."/>
            <person name="Okada M."/>
            <person name="Plessy C."/>
            <person name="Shibata K."/>
            <person name="Shiraki T."/>
            <person name="Suzuki S."/>
            <person name="Tagami M."/>
            <person name="Waki K."/>
            <person name="Watahiki A."/>
            <person name="Okamura-Oho Y."/>
            <person name="Suzuki H."/>
            <person name="Kawai J."/>
            <person name="Hayashizaki Y."/>
        </authorList>
    </citation>
    <scope>NUCLEOTIDE SEQUENCE [LARGE SCALE MRNA]</scope>
    <source>
        <strain>C57BL/6J</strain>
        <tissue>Forelimb</tissue>
        <tissue>Liver</tissue>
    </source>
</reference>
<reference key="3">
    <citation type="journal article" date="2004" name="Genome Res.">
        <title>The status, quality, and expansion of the NIH full-length cDNA project: the Mammalian Gene Collection (MGC).</title>
        <authorList>
            <consortium name="The MGC Project Team"/>
        </authorList>
    </citation>
    <scope>NUCLEOTIDE SEQUENCE [LARGE SCALE MRNA]</scope>
    <source>
        <tissue>Mammary gland</tissue>
    </source>
</reference>
<reference key="4">
    <citation type="journal article" date="2010" name="Cell">
        <title>A tissue-specific atlas of mouse protein phosphorylation and expression.</title>
        <authorList>
            <person name="Huttlin E.L."/>
            <person name="Jedrychowski M.P."/>
            <person name="Elias J.E."/>
            <person name="Goswami T."/>
            <person name="Rad R."/>
            <person name="Beausoleil S.A."/>
            <person name="Villen J."/>
            <person name="Haas W."/>
            <person name="Sowa M.E."/>
            <person name="Gygi S.P."/>
        </authorList>
    </citation>
    <scope>IDENTIFICATION BY MASS SPECTROMETRY [LARGE SCALE ANALYSIS]</scope>
    <source>
        <tissue>Heart</tissue>
        <tissue>Kidney</tissue>
        <tissue>Liver</tissue>
        <tissue>Lung</tissue>
    </source>
</reference>
<keyword id="KW-0496">Mitochondrion</keyword>
<keyword id="KW-1185">Reference proteome</keyword>
<keyword id="KW-0687">Ribonucleoprotein</keyword>
<keyword id="KW-0689">Ribosomal protein</keyword>
<keyword id="KW-0809">Transit peptide</keyword>
<evidence type="ECO:0000250" key="1">
    <source>
        <dbReference type="UniProtKB" id="P09001"/>
    </source>
</evidence>
<evidence type="ECO:0000250" key="2">
    <source>
        <dbReference type="UniProtKB" id="Q3ZBX6"/>
    </source>
</evidence>
<evidence type="ECO:0000305" key="3"/>
<comment type="subunit">
    <text evidence="1">Component of the mitochondrial ribosome large subunit (39S) which comprises a 16S rRNA and about 50 distinct proteins.</text>
</comment>
<comment type="subcellular location">
    <subcellularLocation>
        <location evidence="1">Mitochondrion</location>
    </subcellularLocation>
</comment>
<comment type="similarity">
    <text evidence="3">Belongs to the universal ribosomal protein uL3 family.</text>
</comment>
<accession>Q99N95</accession>
<accession>Q3TF66</accession>
<accession>Q9CVE4</accession>
<feature type="transit peptide" description="Mitochondrion" evidence="2">
    <location>
        <begin position="1"/>
        <end position="40"/>
    </location>
</feature>
<feature type="chain" id="PRO_0000077254" description="Large ribosomal subunit protein uL3m">
    <location>
        <begin position="41"/>
        <end position="348"/>
    </location>
</feature>
<sequence length="348" mass="39110">MPGWRLLAQAGARVLGCGARGLGADPGLERRKNILFFVRNLHSKSSTWWDEHLSEENLSFVKQLVSDENKTQLTSKLNPLKDEPWPLHPWEPGSFRVGLIALKLGMMPLWTKDGQKHAVTLLQVQDCHVLKYTPKEDHNGKIAALTVGGKTVSRFYKPDSRLEFYRDLGLPPKQIHKIFHVTDNAVIKPGTPLYAAHFRPGQYVDVTAKTIGKGFQGVMKRWGFKGQPASHGQTKTHRRPGAISTGDIARVWPGTKMPGRMGNQNRTVYGLKVWRVNTKHNIIYVNGSVPGHKNCLVKIKDSTLPAYKDSCKNLPFPTYFPDGDEEELPEDLFDESVWQPSEPSITFA</sequence>